<reference key="1">
    <citation type="submission" date="1999-10" db="EMBL/GenBank/DDBJ databases">
        <title>cDNA cloning of three profilins from Lilium longiflorum pollen.</title>
        <authorList>
            <person name="Vidali L."/>
            <person name="Cheung A.Y."/>
            <person name="Hepler P.K."/>
        </authorList>
    </citation>
    <scope>NUCLEOTIDE SEQUENCE [MRNA]</scope>
    <source>
        <tissue>Pollen</tissue>
    </source>
</reference>
<name>PROF2_LILLO</name>
<keyword id="KW-0009">Actin-binding</keyword>
<keyword id="KW-0963">Cytoplasm</keyword>
<keyword id="KW-0206">Cytoskeleton</keyword>
<accession>Q9SNW6</accession>
<sequence length="131" mass="14215">MSWQTYVDEHLMCEIDGQHLTAAAIIGHDGSIWAQSESFPQVKSEQITGVMNDFAEPGSLAPTGLFLGDNKYMVIQGEPGAVIRGKKGSGGVTIKKTNMALIVGIYDEPMTPGQCNMVVERLGDYLYDQGF</sequence>
<dbReference type="EMBL" id="AF200185">
    <property type="protein sequence ID" value="AAF08303.1"/>
    <property type="molecule type" value="mRNA"/>
</dbReference>
<dbReference type="SMR" id="Q9SNW6"/>
<dbReference type="GO" id="GO:0005938">
    <property type="term" value="C:cell cortex"/>
    <property type="evidence" value="ECO:0007669"/>
    <property type="project" value="TreeGrafter"/>
</dbReference>
<dbReference type="GO" id="GO:0005856">
    <property type="term" value="C:cytoskeleton"/>
    <property type="evidence" value="ECO:0007669"/>
    <property type="project" value="UniProtKB-SubCell"/>
</dbReference>
<dbReference type="GO" id="GO:0003785">
    <property type="term" value="F:actin monomer binding"/>
    <property type="evidence" value="ECO:0007669"/>
    <property type="project" value="TreeGrafter"/>
</dbReference>
<dbReference type="CDD" id="cd00148">
    <property type="entry name" value="PROF"/>
    <property type="match status" value="1"/>
</dbReference>
<dbReference type="FunFam" id="3.30.450.30:FF:000001">
    <property type="entry name" value="Profilin"/>
    <property type="match status" value="1"/>
</dbReference>
<dbReference type="Gene3D" id="3.30.450.30">
    <property type="entry name" value="Dynein light chain 2a, cytoplasmic"/>
    <property type="match status" value="1"/>
</dbReference>
<dbReference type="InterPro" id="IPR048278">
    <property type="entry name" value="PFN"/>
</dbReference>
<dbReference type="InterPro" id="IPR005455">
    <property type="entry name" value="PFN_euk"/>
</dbReference>
<dbReference type="InterPro" id="IPR036140">
    <property type="entry name" value="PFN_sf"/>
</dbReference>
<dbReference type="InterPro" id="IPR027310">
    <property type="entry name" value="Profilin_CS"/>
</dbReference>
<dbReference type="PANTHER" id="PTHR11604">
    <property type="entry name" value="PROFILIN"/>
    <property type="match status" value="1"/>
</dbReference>
<dbReference type="PANTHER" id="PTHR11604:SF49">
    <property type="entry name" value="PROFILIN-2"/>
    <property type="match status" value="1"/>
</dbReference>
<dbReference type="Pfam" id="PF00235">
    <property type="entry name" value="Profilin"/>
    <property type="match status" value="1"/>
</dbReference>
<dbReference type="PRINTS" id="PR00392">
    <property type="entry name" value="PROFILIN"/>
</dbReference>
<dbReference type="PRINTS" id="PR01640">
    <property type="entry name" value="PROFILINPLNT"/>
</dbReference>
<dbReference type="SMART" id="SM00392">
    <property type="entry name" value="PROF"/>
    <property type="match status" value="1"/>
</dbReference>
<dbReference type="SUPFAM" id="SSF55770">
    <property type="entry name" value="Profilin (actin-binding protein)"/>
    <property type="match status" value="1"/>
</dbReference>
<dbReference type="PROSITE" id="PS00414">
    <property type="entry name" value="PROFILIN"/>
    <property type="match status" value="1"/>
</dbReference>
<feature type="initiator methionine" description="Removed" evidence="1">
    <location>
        <position position="1"/>
    </location>
</feature>
<feature type="chain" id="PRO_0000199641" description="Profilin-2">
    <location>
        <begin position="2"/>
        <end position="131"/>
    </location>
</feature>
<proteinExistence type="evidence at transcript level"/>
<protein>
    <recommendedName>
        <fullName>Profilin-2</fullName>
    </recommendedName>
</protein>
<evidence type="ECO:0000250" key="1"/>
<evidence type="ECO:0000305" key="2"/>
<comment type="function">
    <text evidence="1">Binds to actin and affects the structure of the cytoskeleton. At high concentrations, profilin prevents the polymerization of actin, whereas it enhances it at low concentrations. By binding to PIP2, it inhibits the formation of IP3 and DG (By similarity).</text>
</comment>
<comment type="subunit">
    <text>Occurs in many kinds of cells as a complex with monomeric actin in a 1:1 ratio.</text>
</comment>
<comment type="subcellular location">
    <subcellularLocation>
        <location evidence="1">Cytoplasm</location>
        <location evidence="1">Cytoskeleton</location>
    </subcellularLocation>
</comment>
<comment type="similarity">
    <text evidence="2">Belongs to the profilin family.</text>
</comment>
<organism>
    <name type="scientific">Lilium longiflorum</name>
    <name type="common">Trumpet lily</name>
    <dbReference type="NCBI Taxonomy" id="4690"/>
    <lineage>
        <taxon>Eukaryota</taxon>
        <taxon>Viridiplantae</taxon>
        <taxon>Streptophyta</taxon>
        <taxon>Embryophyta</taxon>
        <taxon>Tracheophyta</taxon>
        <taxon>Spermatophyta</taxon>
        <taxon>Magnoliopsida</taxon>
        <taxon>Liliopsida</taxon>
        <taxon>Liliales</taxon>
        <taxon>Liliaceae</taxon>
        <taxon>Lilium</taxon>
    </lineage>
</organism>